<gene>
    <name evidence="1" type="primary">rpsP</name>
    <name type="ordered locus">CLJ_B2673</name>
</gene>
<dbReference type="EMBL" id="CP001083">
    <property type="protein sequence ID" value="ACQ52212.1"/>
    <property type="molecule type" value="Genomic_DNA"/>
</dbReference>
<dbReference type="RefSeq" id="WP_003362590.1">
    <property type="nucleotide sequence ID" value="NC_012658.1"/>
</dbReference>
<dbReference type="SMR" id="C3L0E6"/>
<dbReference type="KEGG" id="cbi:CLJ_B2673"/>
<dbReference type="HOGENOM" id="CLU_100590_5_0_9"/>
<dbReference type="Proteomes" id="UP000002333">
    <property type="component" value="Chromosome"/>
</dbReference>
<dbReference type="GO" id="GO:0005737">
    <property type="term" value="C:cytoplasm"/>
    <property type="evidence" value="ECO:0007669"/>
    <property type="project" value="UniProtKB-ARBA"/>
</dbReference>
<dbReference type="GO" id="GO:0015935">
    <property type="term" value="C:small ribosomal subunit"/>
    <property type="evidence" value="ECO:0007669"/>
    <property type="project" value="TreeGrafter"/>
</dbReference>
<dbReference type="GO" id="GO:0003735">
    <property type="term" value="F:structural constituent of ribosome"/>
    <property type="evidence" value="ECO:0007669"/>
    <property type="project" value="InterPro"/>
</dbReference>
<dbReference type="GO" id="GO:0006412">
    <property type="term" value="P:translation"/>
    <property type="evidence" value="ECO:0007669"/>
    <property type="project" value="UniProtKB-UniRule"/>
</dbReference>
<dbReference type="FunFam" id="3.30.1320.10:FF:000002">
    <property type="entry name" value="30S ribosomal protein S16"/>
    <property type="match status" value="1"/>
</dbReference>
<dbReference type="Gene3D" id="3.30.1320.10">
    <property type="match status" value="1"/>
</dbReference>
<dbReference type="HAMAP" id="MF_00385">
    <property type="entry name" value="Ribosomal_bS16"/>
    <property type="match status" value="1"/>
</dbReference>
<dbReference type="InterPro" id="IPR000307">
    <property type="entry name" value="Ribosomal_bS16"/>
</dbReference>
<dbReference type="InterPro" id="IPR020592">
    <property type="entry name" value="Ribosomal_bS16_CS"/>
</dbReference>
<dbReference type="InterPro" id="IPR023803">
    <property type="entry name" value="Ribosomal_bS16_dom_sf"/>
</dbReference>
<dbReference type="NCBIfam" id="TIGR00002">
    <property type="entry name" value="S16"/>
    <property type="match status" value="1"/>
</dbReference>
<dbReference type="PANTHER" id="PTHR12919">
    <property type="entry name" value="30S RIBOSOMAL PROTEIN S16"/>
    <property type="match status" value="1"/>
</dbReference>
<dbReference type="PANTHER" id="PTHR12919:SF20">
    <property type="entry name" value="SMALL RIBOSOMAL SUBUNIT PROTEIN BS16M"/>
    <property type="match status" value="1"/>
</dbReference>
<dbReference type="Pfam" id="PF00886">
    <property type="entry name" value="Ribosomal_S16"/>
    <property type="match status" value="1"/>
</dbReference>
<dbReference type="SUPFAM" id="SSF54565">
    <property type="entry name" value="Ribosomal protein S16"/>
    <property type="match status" value="1"/>
</dbReference>
<dbReference type="PROSITE" id="PS00732">
    <property type="entry name" value="RIBOSOMAL_S16"/>
    <property type="match status" value="1"/>
</dbReference>
<keyword id="KW-0687">Ribonucleoprotein</keyword>
<keyword id="KW-0689">Ribosomal protein</keyword>
<feature type="chain" id="PRO_1000205750" description="Small ribosomal subunit protein bS16">
    <location>
        <begin position="1"/>
        <end position="82"/>
    </location>
</feature>
<proteinExistence type="inferred from homology"/>
<organism>
    <name type="scientific">Clostridium botulinum (strain 657 / Type Ba4)</name>
    <dbReference type="NCBI Taxonomy" id="515621"/>
    <lineage>
        <taxon>Bacteria</taxon>
        <taxon>Bacillati</taxon>
        <taxon>Bacillota</taxon>
        <taxon>Clostridia</taxon>
        <taxon>Eubacteriales</taxon>
        <taxon>Clostridiaceae</taxon>
        <taxon>Clostridium</taxon>
    </lineage>
</organism>
<comment type="similarity">
    <text evidence="1">Belongs to the bacterial ribosomal protein bS16 family.</text>
</comment>
<sequence>MAVKMRLKRMGAKKAPFYRVVVADSRSPRDGRFVEEIGYYNPITEPSTIKLDEEKVQKWIKNGAQPTDTVKKLIEKAGISVK</sequence>
<accession>C3L0E6</accession>
<name>RS16_CLOB6</name>
<evidence type="ECO:0000255" key="1">
    <source>
        <dbReference type="HAMAP-Rule" id="MF_00385"/>
    </source>
</evidence>
<evidence type="ECO:0000305" key="2"/>
<reference key="1">
    <citation type="submission" date="2008-05" db="EMBL/GenBank/DDBJ databases">
        <title>Genome sequence of Clostridium botulinum Ba4 strain 657.</title>
        <authorList>
            <person name="Shrivastava S."/>
            <person name="Brown J.L."/>
            <person name="Bruce D."/>
            <person name="Detter C."/>
            <person name="Munk C."/>
            <person name="Smith L.A."/>
            <person name="Smith T.J."/>
            <person name="Sutton G."/>
            <person name="Brettin T.S."/>
        </authorList>
    </citation>
    <scope>NUCLEOTIDE SEQUENCE [LARGE SCALE GENOMIC DNA]</scope>
    <source>
        <strain>657 / Type Ba4</strain>
    </source>
</reference>
<protein>
    <recommendedName>
        <fullName evidence="1">Small ribosomal subunit protein bS16</fullName>
    </recommendedName>
    <alternativeName>
        <fullName evidence="2">30S ribosomal protein S16</fullName>
    </alternativeName>
</protein>